<keyword id="KW-0413">Isomerase</keyword>
<keyword id="KW-0663">Pyridoxal phosphate</keyword>
<keyword id="KW-1185">Reference proteome</keyword>
<accession>B8D0W1</accession>
<reference key="1">
    <citation type="journal article" date="2009" name="PLoS ONE">
        <title>Genome analysis of the anaerobic thermohalophilic bacterium Halothermothrix orenii.</title>
        <authorList>
            <person name="Mavromatis K."/>
            <person name="Ivanova N."/>
            <person name="Anderson I."/>
            <person name="Lykidis A."/>
            <person name="Hooper S.D."/>
            <person name="Sun H."/>
            <person name="Kunin V."/>
            <person name="Lapidus A."/>
            <person name="Hugenholtz P."/>
            <person name="Patel B."/>
            <person name="Kyrpides N.C."/>
        </authorList>
    </citation>
    <scope>NUCLEOTIDE SEQUENCE [LARGE SCALE GENOMIC DNA]</scope>
    <source>
        <strain>H 168 / OCM 544 / DSM 9562</strain>
    </source>
</reference>
<name>ALR_HALOH</name>
<comment type="function">
    <text evidence="1">Catalyzes the interconversion of L-alanine and D-alanine. May also act on other amino acids.</text>
</comment>
<comment type="catalytic activity">
    <reaction evidence="1">
        <text>L-alanine = D-alanine</text>
        <dbReference type="Rhea" id="RHEA:20249"/>
        <dbReference type="ChEBI" id="CHEBI:57416"/>
        <dbReference type="ChEBI" id="CHEBI:57972"/>
        <dbReference type="EC" id="5.1.1.1"/>
    </reaction>
</comment>
<comment type="cofactor">
    <cofactor evidence="1">
        <name>pyridoxal 5'-phosphate</name>
        <dbReference type="ChEBI" id="CHEBI:597326"/>
    </cofactor>
</comment>
<comment type="pathway">
    <text evidence="1">Amino-acid biosynthesis; D-alanine biosynthesis; D-alanine from L-alanine: step 1/1.</text>
</comment>
<comment type="similarity">
    <text evidence="1">Belongs to the alanine racemase family.</text>
</comment>
<dbReference type="EC" id="5.1.1.1" evidence="1"/>
<dbReference type="EMBL" id="CP001098">
    <property type="protein sequence ID" value="ACL68930.1"/>
    <property type="molecule type" value="Genomic_DNA"/>
</dbReference>
<dbReference type="RefSeq" id="WP_012635128.1">
    <property type="nucleotide sequence ID" value="NC_011899.1"/>
</dbReference>
<dbReference type="SMR" id="B8D0W1"/>
<dbReference type="STRING" id="373903.Hore_01680"/>
<dbReference type="KEGG" id="hor:Hore_01680"/>
<dbReference type="eggNOG" id="COG0787">
    <property type="taxonomic scope" value="Bacteria"/>
</dbReference>
<dbReference type="HOGENOM" id="CLU_028393_2_2_9"/>
<dbReference type="OrthoDB" id="9813814at2"/>
<dbReference type="UniPathway" id="UPA00042">
    <property type="reaction ID" value="UER00497"/>
</dbReference>
<dbReference type="Proteomes" id="UP000000719">
    <property type="component" value="Chromosome"/>
</dbReference>
<dbReference type="GO" id="GO:0005829">
    <property type="term" value="C:cytosol"/>
    <property type="evidence" value="ECO:0007669"/>
    <property type="project" value="TreeGrafter"/>
</dbReference>
<dbReference type="GO" id="GO:0008784">
    <property type="term" value="F:alanine racemase activity"/>
    <property type="evidence" value="ECO:0007669"/>
    <property type="project" value="UniProtKB-UniRule"/>
</dbReference>
<dbReference type="GO" id="GO:0030170">
    <property type="term" value="F:pyridoxal phosphate binding"/>
    <property type="evidence" value="ECO:0007669"/>
    <property type="project" value="UniProtKB-UniRule"/>
</dbReference>
<dbReference type="GO" id="GO:0030632">
    <property type="term" value="P:D-alanine biosynthetic process"/>
    <property type="evidence" value="ECO:0007669"/>
    <property type="project" value="UniProtKB-UniRule"/>
</dbReference>
<dbReference type="GO" id="GO:0009252">
    <property type="term" value="P:peptidoglycan biosynthetic process"/>
    <property type="evidence" value="ECO:0007669"/>
    <property type="project" value="TreeGrafter"/>
</dbReference>
<dbReference type="CDD" id="cd00430">
    <property type="entry name" value="PLPDE_III_AR"/>
    <property type="match status" value="1"/>
</dbReference>
<dbReference type="FunFam" id="2.40.37.10:FF:000006">
    <property type="entry name" value="Alanine racemase"/>
    <property type="match status" value="1"/>
</dbReference>
<dbReference type="FunFam" id="3.20.20.10:FF:000002">
    <property type="entry name" value="Alanine racemase"/>
    <property type="match status" value="1"/>
</dbReference>
<dbReference type="Gene3D" id="3.20.20.10">
    <property type="entry name" value="Alanine racemase"/>
    <property type="match status" value="1"/>
</dbReference>
<dbReference type="Gene3D" id="2.40.37.10">
    <property type="entry name" value="Lyase, Ornithine Decarboxylase, Chain A, domain 1"/>
    <property type="match status" value="1"/>
</dbReference>
<dbReference type="HAMAP" id="MF_01201">
    <property type="entry name" value="Ala_racemase"/>
    <property type="match status" value="1"/>
</dbReference>
<dbReference type="InterPro" id="IPR000821">
    <property type="entry name" value="Ala_racemase"/>
</dbReference>
<dbReference type="InterPro" id="IPR009006">
    <property type="entry name" value="Ala_racemase/Decarboxylase_C"/>
</dbReference>
<dbReference type="InterPro" id="IPR011079">
    <property type="entry name" value="Ala_racemase_C"/>
</dbReference>
<dbReference type="InterPro" id="IPR001608">
    <property type="entry name" value="Ala_racemase_N"/>
</dbReference>
<dbReference type="InterPro" id="IPR020622">
    <property type="entry name" value="Ala_racemase_pyridoxalP-BS"/>
</dbReference>
<dbReference type="InterPro" id="IPR029066">
    <property type="entry name" value="PLP-binding_barrel"/>
</dbReference>
<dbReference type="NCBIfam" id="TIGR00492">
    <property type="entry name" value="alr"/>
    <property type="match status" value="1"/>
</dbReference>
<dbReference type="PANTHER" id="PTHR30511">
    <property type="entry name" value="ALANINE RACEMASE"/>
    <property type="match status" value="1"/>
</dbReference>
<dbReference type="PANTHER" id="PTHR30511:SF0">
    <property type="entry name" value="ALANINE RACEMASE, CATABOLIC-RELATED"/>
    <property type="match status" value="1"/>
</dbReference>
<dbReference type="Pfam" id="PF00842">
    <property type="entry name" value="Ala_racemase_C"/>
    <property type="match status" value="1"/>
</dbReference>
<dbReference type="Pfam" id="PF01168">
    <property type="entry name" value="Ala_racemase_N"/>
    <property type="match status" value="1"/>
</dbReference>
<dbReference type="PRINTS" id="PR00992">
    <property type="entry name" value="ALARACEMASE"/>
</dbReference>
<dbReference type="SMART" id="SM01005">
    <property type="entry name" value="Ala_racemase_C"/>
    <property type="match status" value="1"/>
</dbReference>
<dbReference type="SUPFAM" id="SSF50621">
    <property type="entry name" value="Alanine racemase C-terminal domain-like"/>
    <property type="match status" value="1"/>
</dbReference>
<dbReference type="SUPFAM" id="SSF51419">
    <property type="entry name" value="PLP-binding barrel"/>
    <property type="match status" value="1"/>
</dbReference>
<dbReference type="PROSITE" id="PS00395">
    <property type="entry name" value="ALANINE_RACEMASE"/>
    <property type="match status" value="1"/>
</dbReference>
<sequence length="379" mass="42138">MNKRITRPTWAEIDLSCLQFNFNQVKEILGSNVKIMSVVKADAYGHGVIPVAKTLVEAGTQRLAVAIPEEGVELREAGLSVPIQVLGEVLPSQYELLFKYDLIPTVGREETALSLNRLAAKYNVVKKVHIKVDTGMGRIGVRPREAVGFVKKVNSLSNIKIEGLMTHFASADERDKSYTYEQWDKFKQVLDGLNKLRIDIPIKHSSNSAAIIDFKKFGLDMVRPGIMLYGLKPSRDLINNIDLKPVLTWKTRIVYLKEVPPGTGISYGTTYVTNRKSKIATLPVGYADGYPRILSNQGQVLVRGRKAPIRGRVCMDQIMIDVTEIPDVRVGDEVVLIGEQGTQKISATDIAEKADTINYEIVCGISQRVPREYKNKIGG</sequence>
<evidence type="ECO:0000255" key="1">
    <source>
        <dbReference type="HAMAP-Rule" id="MF_01201"/>
    </source>
</evidence>
<organism>
    <name type="scientific">Halothermothrix orenii (strain H 168 / OCM 544 / DSM 9562)</name>
    <dbReference type="NCBI Taxonomy" id="373903"/>
    <lineage>
        <taxon>Bacteria</taxon>
        <taxon>Bacillati</taxon>
        <taxon>Bacillota</taxon>
        <taxon>Clostridia</taxon>
        <taxon>Halanaerobiales</taxon>
        <taxon>Halothermotrichaceae</taxon>
        <taxon>Halothermothrix</taxon>
    </lineage>
</organism>
<gene>
    <name type="primary">alr</name>
    <name type="ordered locus">Hore_01680</name>
</gene>
<protein>
    <recommendedName>
        <fullName evidence="1">Alanine racemase</fullName>
        <ecNumber evidence="1">5.1.1.1</ecNumber>
    </recommendedName>
</protein>
<feature type="chain" id="PRO_1000164600" description="Alanine racemase">
    <location>
        <begin position="1"/>
        <end position="379"/>
    </location>
</feature>
<feature type="active site" description="Proton acceptor; specific for D-alanine" evidence="1">
    <location>
        <position position="40"/>
    </location>
</feature>
<feature type="active site" description="Proton acceptor; specific for L-alanine" evidence="1">
    <location>
        <position position="267"/>
    </location>
</feature>
<feature type="binding site" evidence="1">
    <location>
        <position position="138"/>
    </location>
    <ligand>
        <name>substrate</name>
    </ligand>
</feature>
<feature type="binding site" evidence="1">
    <location>
        <position position="315"/>
    </location>
    <ligand>
        <name>substrate</name>
    </ligand>
</feature>
<feature type="modified residue" description="N6-(pyridoxal phosphate)lysine" evidence="1">
    <location>
        <position position="40"/>
    </location>
</feature>
<proteinExistence type="inferred from homology"/>